<dbReference type="EMBL" id="BC109797">
    <property type="protein sequence ID" value="AAI09798.1"/>
    <property type="molecule type" value="mRNA"/>
</dbReference>
<dbReference type="EMBL" id="DV832064">
    <property type="status" value="NOT_ANNOTATED_CDS"/>
    <property type="molecule type" value="mRNA"/>
</dbReference>
<dbReference type="RefSeq" id="NP_001035598.1">
    <molecule id="Q2TBQ7-2"/>
    <property type="nucleotide sequence ID" value="NM_001040508.2"/>
</dbReference>
<dbReference type="RefSeq" id="NP_001339053.1">
    <molecule id="Q2TBQ7-1"/>
    <property type="nucleotide sequence ID" value="NM_001352124.1"/>
</dbReference>
<dbReference type="RefSeq" id="XP_010808221.1">
    <property type="nucleotide sequence ID" value="XM_010809919.2"/>
</dbReference>
<dbReference type="SMR" id="Q2TBQ7"/>
<dbReference type="FunCoup" id="Q2TBQ7">
    <property type="interactions" value="53"/>
</dbReference>
<dbReference type="STRING" id="9913.ENSBTAP00000043981"/>
<dbReference type="PaxDb" id="9913-ENSBTAP00000043981"/>
<dbReference type="Ensembl" id="ENSBTAT00000046712.4">
    <molecule id="Q2TBQ7-2"/>
    <property type="protein sequence ID" value="ENSBTAP00000043981.3"/>
    <property type="gene ID" value="ENSBTAG00000032905.5"/>
</dbReference>
<dbReference type="GeneID" id="506362"/>
<dbReference type="KEGG" id="bta:506362"/>
<dbReference type="CTD" id="151393"/>
<dbReference type="VEuPathDB" id="HostDB:ENSBTAG00000032905"/>
<dbReference type="eggNOG" id="ENOG502QS2U">
    <property type="taxonomic scope" value="Eukaryota"/>
</dbReference>
<dbReference type="GeneTree" id="ENSGT00950000182992"/>
<dbReference type="HOGENOM" id="CLU_046369_0_0_1"/>
<dbReference type="InParanoid" id="Q2TBQ7"/>
<dbReference type="OMA" id="KCAESHQ"/>
<dbReference type="OrthoDB" id="512473at2759"/>
<dbReference type="TreeFam" id="TF315854"/>
<dbReference type="Proteomes" id="UP000009136">
    <property type="component" value="Chromosome 11"/>
</dbReference>
<dbReference type="Bgee" id="ENSBTAG00000032905">
    <property type="expression patterns" value="Expressed in diaphragm and 106 other cell types or tissues"/>
</dbReference>
<dbReference type="GO" id="GO:0005737">
    <property type="term" value="C:cytoplasm"/>
    <property type="evidence" value="ECO:0000318"/>
    <property type="project" value="GO_Central"/>
</dbReference>
<dbReference type="GO" id="GO:0016020">
    <property type="term" value="C:membrane"/>
    <property type="evidence" value="ECO:0007669"/>
    <property type="project" value="UniProtKB-SubCell"/>
</dbReference>
<dbReference type="GO" id="GO:0005739">
    <property type="term" value="C:mitochondrion"/>
    <property type="evidence" value="ECO:0000318"/>
    <property type="project" value="GO_Central"/>
</dbReference>
<dbReference type="GO" id="GO:0097431">
    <property type="term" value="C:mitotic spindle pole"/>
    <property type="evidence" value="ECO:0000318"/>
    <property type="project" value="GO_Central"/>
</dbReference>
<dbReference type="GO" id="GO:0005876">
    <property type="term" value="C:spindle microtubule"/>
    <property type="evidence" value="ECO:0000318"/>
    <property type="project" value="GO_Central"/>
</dbReference>
<dbReference type="GO" id="GO:0008017">
    <property type="term" value="F:microtubule binding"/>
    <property type="evidence" value="ECO:0000318"/>
    <property type="project" value="GO_Central"/>
</dbReference>
<dbReference type="Gene3D" id="1.25.40.10">
    <property type="entry name" value="Tetratricopeptide repeat domain"/>
    <property type="match status" value="1"/>
</dbReference>
<dbReference type="InterPro" id="IPR049039">
    <property type="entry name" value="RMD1-3_a_helical_rpt"/>
</dbReference>
<dbReference type="InterPro" id="IPR011990">
    <property type="entry name" value="TPR-like_helical_dom_sf"/>
</dbReference>
<dbReference type="PANTHER" id="PTHR16056">
    <property type="entry name" value="REGULATOR OF MICROTUBULE DYNAMICS PROTEIN"/>
    <property type="match status" value="1"/>
</dbReference>
<dbReference type="PANTHER" id="PTHR16056:SF15">
    <property type="entry name" value="REGULATOR OF MICROTUBULE DYNAMICS PROTEIN 2"/>
    <property type="match status" value="1"/>
</dbReference>
<dbReference type="Pfam" id="PF21033">
    <property type="entry name" value="RMD1-3"/>
    <property type="match status" value="1"/>
</dbReference>
<dbReference type="SUPFAM" id="SSF48452">
    <property type="entry name" value="TPR-like"/>
    <property type="match status" value="1"/>
</dbReference>
<keyword id="KW-0025">Alternative splicing</keyword>
<keyword id="KW-0175">Coiled coil</keyword>
<keyword id="KW-0963">Cytoplasm</keyword>
<keyword id="KW-0206">Cytoskeleton</keyword>
<keyword id="KW-0472">Membrane</keyword>
<keyword id="KW-0493">Microtubule</keyword>
<keyword id="KW-0597">Phosphoprotein</keyword>
<keyword id="KW-1185">Reference proteome</keyword>
<keyword id="KW-0812">Transmembrane</keyword>
<keyword id="KW-1133">Transmembrane helix</keyword>
<name>RMD2_BOVIN</name>
<feature type="chain" id="PRO_0000287503" description="Regulator of microtubule dynamics protein 2">
    <location>
        <begin position="1"/>
        <end position="410"/>
    </location>
</feature>
<feature type="transmembrane region" description="Helical" evidence="4">
    <location>
        <begin position="10"/>
        <end position="27"/>
    </location>
</feature>
<feature type="region of interest" description="Disordered" evidence="5">
    <location>
        <begin position="122"/>
        <end position="153"/>
    </location>
</feature>
<feature type="coiled-coil region" evidence="4">
    <location>
        <begin position="71"/>
        <end position="109"/>
    </location>
</feature>
<feature type="compositionally biased region" description="Basic residues" evidence="5">
    <location>
        <begin position="122"/>
        <end position="131"/>
    </location>
</feature>
<feature type="modified residue" description="Phosphoserine" evidence="2">
    <location>
        <position position="121"/>
    </location>
</feature>
<feature type="modified residue" description="Phosphothreonine" evidence="3">
    <location>
        <position position="139"/>
    </location>
</feature>
<feature type="modified residue" description="Phosphotyrosine" evidence="3">
    <location>
        <position position="152"/>
    </location>
</feature>
<feature type="modified residue" description="Phosphothreonine" evidence="3">
    <location>
        <position position="154"/>
    </location>
</feature>
<feature type="modified residue" description="Phosphothreonine" evidence="3">
    <location>
        <position position="157"/>
    </location>
</feature>
<feature type="splice variant" id="VSP_025523" description="In isoform 2." evidence="6">
    <original>MPHSTNREMILGIVVGTAGISLLLLWYHKVRKPRTAMSLPKFLSLGNSLDLMTLQDEMPSGQGTTAIFQGRQLQILEKLNELLTHMEELKEEIRVLKEAIPKLEEYIQGELGGKVTVHKISPQHRARKRRLATVQSSATSNSSEEAESEGG</original>
    <variation>MGKCLSCYKEEQNCQPKCPADQLPSDLLHRGASSVIQPTKFLDFKAARPTPMLKGSSHKGSKISSPSSNVSFYATFLERRHSLFPKFQKSSTSLHTVQSRANFDSEEKRSFIDLKSASEHFRFRSRSVFSAPKLSIISCYENAGTFDASSSCIFNPNEVEVISKNSNITGAEKYIHSYSAEYDTTYFMKSKSKANSSACRDTVATLYQSTATMLTLPSIISYSSEQHGIDNDIQERDQ</variation>
    <location>
        <begin position="1"/>
        <end position="151"/>
    </location>
</feature>
<protein>
    <recommendedName>
        <fullName>Regulator of microtubule dynamics protein 2</fullName>
        <shortName>RMD-2</shortName>
    </recommendedName>
    <alternativeName>
        <fullName>Protein FAM82A1</fullName>
    </alternativeName>
</protein>
<gene>
    <name type="primary">RMDN2</name>
    <name type="synonym">FAM82A</name>
    <name type="synonym">FAM82A1</name>
</gene>
<reference key="1">
    <citation type="submission" date="2005-11" db="EMBL/GenBank/DDBJ databases">
        <authorList>
            <consortium name="NIH - Mammalian Gene Collection (MGC) project"/>
        </authorList>
    </citation>
    <scope>NUCLEOTIDE SEQUENCE [LARGE SCALE MRNA] (ISOFORM 2)</scope>
    <scope>NUCLEOTIDE SEQUENCE [LARGE SCALE MRNA] OF 1-213 (ISOFORM 1)</scope>
    <source>
        <strain>Crossbred X Angus</strain>
        <tissue>Liver</tissue>
    </source>
</reference>
<evidence type="ECO:0000250" key="1"/>
<evidence type="ECO:0000250" key="2">
    <source>
        <dbReference type="UniProtKB" id="Q498D5"/>
    </source>
</evidence>
<evidence type="ECO:0000250" key="3">
    <source>
        <dbReference type="UniProtKB" id="Q96LZ7"/>
    </source>
</evidence>
<evidence type="ECO:0000255" key="4"/>
<evidence type="ECO:0000256" key="5">
    <source>
        <dbReference type="SAM" id="MobiDB-lite"/>
    </source>
</evidence>
<evidence type="ECO:0000303" key="6">
    <source ref="1"/>
</evidence>
<evidence type="ECO:0000305" key="7"/>
<comment type="subunit">
    <text evidence="1">Interacts with microtubules.</text>
</comment>
<comment type="subcellular location">
    <subcellularLocation>
        <location evidence="7">Membrane</location>
        <topology evidence="7">Single-pass membrane protein</topology>
    </subcellularLocation>
    <subcellularLocation>
        <location>Cytoplasm</location>
    </subcellularLocation>
    <subcellularLocation>
        <location evidence="1">Cytoplasm</location>
        <location evidence="1">Cytoskeleton</location>
        <location evidence="1">Spindle</location>
    </subcellularLocation>
    <subcellularLocation>
        <location evidence="1">Cytoplasm</location>
        <location evidence="1">Cytoskeleton</location>
        <location evidence="1">Spindle pole</location>
    </subcellularLocation>
    <text evidence="1">In interphase localizes in the cytoplasm, and during mitosis localizes to the spindle microtubules and spindle poles. Also detected as large dots in the perinuclear region (By similarity).</text>
</comment>
<comment type="alternative products">
    <event type="alternative splicing"/>
    <isoform>
        <id>Q2TBQ7-1</id>
        <name>1</name>
        <sequence type="displayed"/>
    </isoform>
    <isoform>
        <id>Q2TBQ7-2</id>
        <name>2</name>
        <sequence type="described" ref="VSP_025523"/>
    </isoform>
</comment>
<comment type="similarity">
    <text evidence="7">Belongs to the RMDN family.</text>
</comment>
<comment type="sequence caution" evidence="7">
    <conflict type="frameshift">
        <sequence resource="EMBL" id="DV832064"/>
    </conflict>
</comment>
<accession>Q2TBQ7</accession>
<organism>
    <name type="scientific">Bos taurus</name>
    <name type="common">Bovine</name>
    <dbReference type="NCBI Taxonomy" id="9913"/>
    <lineage>
        <taxon>Eukaryota</taxon>
        <taxon>Metazoa</taxon>
        <taxon>Chordata</taxon>
        <taxon>Craniata</taxon>
        <taxon>Vertebrata</taxon>
        <taxon>Euteleostomi</taxon>
        <taxon>Mammalia</taxon>
        <taxon>Eutheria</taxon>
        <taxon>Laurasiatheria</taxon>
        <taxon>Artiodactyla</taxon>
        <taxon>Ruminantia</taxon>
        <taxon>Pecora</taxon>
        <taxon>Bovidae</taxon>
        <taxon>Bovinae</taxon>
        <taxon>Bos</taxon>
    </lineage>
</organism>
<proteinExistence type="evidence at transcript level"/>
<sequence length="410" mass="47067">MPHSTNREMILGIVVGTAGISLLLLWYHKVRKPRTAMSLPKFLSLGNSLDLMTLQDEMPSGQGTTAIFQGRQLQILEKLNELLTHMEELKEEIRVLKEAIPKLEEYIQGELGGKVTVHKISPQHRARKRRLATVQSSATSNSSEEAESEGGYVTANTDTEEQSFPVPKEFNTHVEELNLDALIQRADNLRVNESRKVESFELLCDHKEKFRDEIEFIWRFARAYGDMYELSTNIQEKKHYANIGKTLGEKAIMRAPKNGYCHLWYAVLCGYVSEFEGLQNKINYGYRFKEHLDKAIEFLPEEPFLYYLKGRYCYAVSKLSWIERKMAATLFGNIPSSTVQEALQNFLKVEELQPGFSKSNYMFMAKCYADLNQIDSAMKFCNLAVLLPCITKEDKDAQKEVKKISTSLKR</sequence>